<evidence type="ECO:0000255" key="1">
    <source>
        <dbReference type="HAMAP-Rule" id="MF_01261"/>
    </source>
</evidence>
<gene>
    <name evidence="1" type="primary">cca</name>
    <name type="ordered locus">STM3204</name>
</gene>
<proteinExistence type="inferred from homology"/>
<organism>
    <name type="scientific">Salmonella typhimurium (strain LT2 / SGSC1412 / ATCC 700720)</name>
    <dbReference type="NCBI Taxonomy" id="99287"/>
    <lineage>
        <taxon>Bacteria</taxon>
        <taxon>Pseudomonadati</taxon>
        <taxon>Pseudomonadota</taxon>
        <taxon>Gammaproteobacteria</taxon>
        <taxon>Enterobacterales</taxon>
        <taxon>Enterobacteriaceae</taxon>
        <taxon>Salmonella</taxon>
    </lineage>
</organism>
<protein>
    <recommendedName>
        <fullName evidence="1">Multifunctional CCA protein</fullName>
    </recommendedName>
    <domain>
        <recommendedName>
            <fullName evidence="1">CCA-adding enzyme</fullName>
            <ecNumber evidence="1">2.7.7.72</ecNumber>
        </recommendedName>
        <alternativeName>
            <fullName evidence="1">CCA tRNA nucleotidyltransferase</fullName>
        </alternativeName>
        <alternativeName>
            <fullName evidence="1">tRNA CCA-pyrophosphorylase</fullName>
        </alternativeName>
        <alternativeName>
            <fullName evidence="1">tRNA adenylyl-/cytidylyl-transferase</fullName>
        </alternativeName>
        <alternativeName>
            <fullName evidence="1">tRNA nucleotidyltransferase</fullName>
        </alternativeName>
        <alternativeName>
            <fullName evidence="1">tRNA-NT</fullName>
        </alternativeName>
    </domain>
    <domain>
        <recommendedName>
            <fullName evidence="1">2'-nucleotidase</fullName>
            <ecNumber evidence="1">3.1.3.-</ecNumber>
        </recommendedName>
    </domain>
    <domain>
        <recommendedName>
            <fullName evidence="1">2',3'-cyclic phosphodiesterase</fullName>
            <ecNumber evidence="1">3.1.4.-</ecNumber>
        </recommendedName>
    </domain>
    <domain>
        <recommendedName>
            <fullName evidence="1">Phosphatase</fullName>
            <ecNumber evidence="1">3.1.3.-</ecNumber>
        </recommendedName>
    </domain>
</protein>
<sequence>MKIYLVGGAVRDALLGLPVKDKDWVVVGATPQEMLDAGYQQVGRDFPVFLHPQTHEEYALARTERKSGSGYTGFTCYAAPDVTLEADLQRRDLTINALARDDAGQIIDPYHGRRDLEARLLRHVSPAFGEDPLRVLRVARFAARYAHLSFRIADETLALMREMTAAGELEHLTPERVWKETENALTTRNPQVYFQVLRDCGALRVLFPEIDALFGVPAPAKWHPEIDTGVHTLMTLSMAAMLSPQLDVRFATLCHDLGKGLTPKNLWPRHHGHGPAGVKLVEQLCQRLRVPNDLRDLAKLVAEYHDLIHTFPILQPKTIVKLFDAIDAWRKPQRVEQIALTSEADVRGRTGFEASDYPQGRWLREAWQVAQAVPTKEVVEAGFKGIEIREELTKRRIAAVANWKEKRCPNPAS</sequence>
<feature type="chain" id="PRO_0000139000" description="Multifunctional CCA protein">
    <location>
        <begin position="1"/>
        <end position="413"/>
    </location>
</feature>
<feature type="domain" description="HD" evidence="1">
    <location>
        <begin position="228"/>
        <end position="329"/>
    </location>
</feature>
<feature type="binding site" evidence="1">
    <location>
        <position position="8"/>
    </location>
    <ligand>
        <name>ATP</name>
        <dbReference type="ChEBI" id="CHEBI:30616"/>
    </ligand>
</feature>
<feature type="binding site" evidence="1">
    <location>
        <position position="8"/>
    </location>
    <ligand>
        <name>CTP</name>
        <dbReference type="ChEBI" id="CHEBI:37563"/>
    </ligand>
</feature>
<feature type="binding site" evidence="1">
    <location>
        <position position="11"/>
    </location>
    <ligand>
        <name>ATP</name>
        <dbReference type="ChEBI" id="CHEBI:30616"/>
    </ligand>
</feature>
<feature type="binding site" evidence="1">
    <location>
        <position position="11"/>
    </location>
    <ligand>
        <name>CTP</name>
        <dbReference type="ChEBI" id="CHEBI:37563"/>
    </ligand>
</feature>
<feature type="binding site" evidence="1">
    <location>
        <position position="21"/>
    </location>
    <ligand>
        <name>Mg(2+)</name>
        <dbReference type="ChEBI" id="CHEBI:18420"/>
    </ligand>
</feature>
<feature type="binding site" evidence="1">
    <location>
        <position position="23"/>
    </location>
    <ligand>
        <name>Mg(2+)</name>
        <dbReference type="ChEBI" id="CHEBI:18420"/>
    </ligand>
</feature>
<feature type="binding site" evidence="1">
    <location>
        <position position="91"/>
    </location>
    <ligand>
        <name>ATP</name>
        <dbReference type="ChEBI" id="CHEBI:30616"/>
    </ligand>
</feature>
<feature type="binding site" evidence="1">
    <location>
        <position position="91"/>
    </location>
    <ligand>
        <name>CTP</name>
        <dbReference type="ChEBI" id="CHEBI:37563"/>
    </ligand>
</feature>
<feature type="binding site" evidence="1">
    <location>
        <position position="137"/>
    </location>
    <ligand>
        <name>ATP</name>
        <dbReference type="ChEBI" id="CHEBI:30616"/>
    </ligand>
</feature>
<feature type="binding site" evidence="1">
    <location>
        <position position="137"/>
    </location>
    <ligand>
        <name>CTP</name>
        <dbReference type="ChEBI" id="CHEBI:37563"/>
    </ligand>
</feature>
<feature type="binding site" evidence="1">
    <location>
        <position position="140"/>
    </location>
    <ligand>
        <name>ATP</name>
        <dbReference type="ChEBI" id="CHEBI:30616"/>
    </ligand>
</feature>
<feature type="binding site" evidence="1">
    <location>
        <position position="140"/>
    </location>
    <ligand>
        <name>CTP</name>
        <dbReference type="ChEBI" id="CHEBI:37563"/>
    </ligand>
</feature>
<name>CCA_SALTY</name>
<keyword id="KW-0067">ATP-binding</keyword>
<keyword id="KW-0378">Hydrolase</keyword>
<keyword id="KW-0460">Magnesium</keyword>
<keyword id="KW-0479">Metal-binding</keyword>
<keyword id="KW-0511">Multifunctional enzyme</keyword>
<keyword id="KW-0533">Nickel</keyword>
<keyword id="KW-0547">Nucleotide-binding</keyword>
<keyword id="KW-0548">Nucleotidyltransferase</keyword>
<keyword id="KW-1185">Reference proteome</keyword>
<keyword id="KW-0692">RNA repair</keyword>
<keyword id="KW-0694">RNA-binding</keyword>
<keyword id="KW-0808">Transferase</keyword>
<keyword id="KW-0819">tRNA processing</keyword>
<comment type="function">
    <text evidence="1">Catalyzes the addition and repair of the essential 3'-terminal CCA sequence in tRNAs without using a nucleic acid template. Adds these three nucleotides in the order of C, C, and A to the tRNA nucleotide-73, using CTP and ATP as substrates and producing inorganic pyrophosphate. tRNA 3'-terminal CCA addition is required both for tRNA processing and repair. Also involved in tRNA surveillance by mediating tandem CCA addition to generate a CCACCA at the 3' terminus of unstable tRNAs. While stable tRNAs receive only 3'-terminal CCA, unstable tRNAs are marked with CCACCA and rapidly degraded.</text>
</comment>
<comment type="catalytic activity">
    <reaction evidence="1">
        <text>a tRNA precursor + 2 CTP + ATP = a tRNA with a 3' CCA end + 3 diphosphate</text>
        <dbReference type="Rhea" id="RHEA:14433"/>
        <dbReference type="Rhea" id="RHEA-COMP:10465"/>
        <dbReference type="Rhea" id="RHEA-COMP:10468"/>
        <dbReference type="ChEBI" id="CHEBI:30616"/>
        <dbReference type="ChEBI" id="CHEBI:33019"/>
        <dbReference type="ChEBI" id="CHEBI:37563"/>
        <dbReference type="ChEBI" id="CHEBI:74896"/>
        <dbReference type="ChEBI" id="CHEBI:83071"/>
        <dbReference type="EC" id="2.7.7.72"/>
    </reaction>
</comment>
<comment type="catalytic activity">
    <reaction evidence="1">
        <text>a tRNA with a 3' CCA end + 2 CTP + ATP = a tRNA with a 3' CCACCA end + 3 diphosphate</text>
        <dbReference type="Rhea" id="RHEA:76235"/>
        <dbReference type="Rhea" id="RHEA-COMP:10468"/>
        <dbReference type="Rhea" id="RHEA-COMP:18655"/>
        <dbReference type="ChEBI" id="CHEBI:30616"/>
        <dbReference type="ChEBI" id="CHEBI:33019"/>
        <dbReference type="ChEBI" id="CHEBI:37563"/>
        <dbReference type="ChEBI" id="CHEBI:83071"/>
        <dbReference type="ChEBI" id="CHEBI:195187"/>
    </reaction>
    <physiologicalReaction direction="left-to-right" evidence="1">
        <dbReference type="Rhea" id="RHEA:76236"/>
    </physiologicalReaction>
</comment>
<comment type="cofactor">
    <cofactor evidence="1">
        <name>Mg(2+)</name>
        <dbReference type="ChEBI" id="CHEBI:18420"/>
    </cofactor>
    <text evidence="1">Magnesium is required for nucleotidyltransferase activity.</text>
</comment>
<comment type="cofactor">
    <cofactor evidence="1">
        <name>Ni(2+)</name>
        <dbReference type="ChEBI" id="CHEBI:49786"/>
    </cofactor>
    <text evidence="1">Nickel for phosphatase activity.</text>
</comment>
<comment type="subunit">
    <text evidence="1">Monomer. Can also form homodimers and oligomers.</text>
</comment>
<comment type="domain">
    <text evidence="1">Comprises two domains: an N-terminal domain containing the nucleotidyltransferase activity and a C-terminal HD domain associated with both phosphodiesterase and phosphatase activities.</text>
</comment>
<comment type="miscellaneous">
    <text evidence="1">A single active site specifically recognizes both ATP and CTP and is responsible for their addition.</text>
</comment>
<comment type="similarity">
    <text evidence="1">Belongs to the tRNA nucleotidyltransferase/poly(A) polymerase family. Bacterial CCA-adding enzyme type 1 subfamily.</text>
</comment>
<reference key="1">
    <citation type="journal article" date="2001" name="Nature">
        <title>Complete genome sequence of Salmonella enterica serovar Typhimurium LT2.</title>
        <authorList>
            <person name="McClelland M."/>
            <person name="Sanderson K.E."/>
            <person name="Spieth J."/>
            <person name="Clifton S.W."/>
            <person name="Latreille P."/>
            <person name="Courtney L."/>
            <person name="Porwollik S."/>
            <person name="Ali J."/>
            <person name="Dante M."/>
            <person name="Du F."/>
            <person name="Hou S."/>
            <person name="Layman D."/>
            <person name="Leonard S."/>
            <person name="Nguyen C."/>
            <person name="Scott K."/>
            <person name="Holmes A."/>
            <person name="Grewal N."/>
            <person name="Mulvaney E."/>
            <person name="Ryan E."/>
            <person name="Sun H."/>
            <person name="Florea L."/>
            <person name="Miller W."/>
            <person name="Stoneking T."/>
            <person name="Nhan M."/>
            <person name="Waterston R."/>
            <person name="Wilson R.K."/>
        </authorList>
    </citation>
    <scope>NUCLEOTIDE SEQUENCE [LARGE SCALE GENOMIC DNA]</scope>
    <source>
        <strain>LT2 / SGSC1412 / ATCC 700720</strain>
    </source>
</reference>
<dbReference type="EC" id="2.7.7.72" evidence="1"/>
<dbReference type="EC" id="3.1.3.-" evidence="1"/>
<dbReference type="EC" id="3.1.4.-" evidence="1"/>
<dbReference type="EMBL" id="AE006468">
    <property type="protein sequence ID" value="AAL22078.1"/>
    <property type="molecule type" value="Genomic_DNA"/>
</dbReference>
<dbReference type="RefSeq" id="NP_462119.1">
    <property type="nucleotide sequence ID" value="NC_003197.2"/>
</dbReference>
<dbReference type="RefSeq" id="WP_000708443.1">
    <property type="nucleotide sequence ID" value="NC_003197.2"/>
</dbReference>
<dbReference type="SMR" id="Q8ZLY4"/>
<dbReference type="STRING" id="99287.STM3204"/>
<dbReference type="PaxDb" id="99287-STM3204"/>
<dbReference type="DNASU" id="1254727"/>
<dbReference type="GeneID" id="1254727"/>
<dbReference type="KEGG" id="stm:STM3204"/>
<dbReference type="PATRIC" id="fig|99287.12.peg.3399"/>
<dbReference type="HOGENOM" id="CLU_015961_1_1_6"/>
<dbReference type="OMA" id="GWTFHGH"/>
<dbReference type="PhylomeDB" id="Q8ZLY4"/>
<dbReference type="BioCyc" id="SENT99287:STM3204-MONOMER"/>
<dbReference type="Proteomes" id="UP000001014">
    <property type="component" value="Chromosome"/>
</dbReference>
<dbReference type="GO" id="GO:0005524">
    <property type="term" value="F:ATP binding"/>
    <property type="evidence" value="ECO:0007669"/>
    <property type="project" value="UniProtKB-UniRule"/>
</dbReference>
<dbReference type="GO" id="GO:0004810">
    <property type="term" value="F:CCA tRNA nucleotidyltransferase activity"/>
    <property type="evidence" value="ECO:0007669"/>
    <property type="project" value="UniProtKB-UniRule"/>
</dbReference>
<dbReference type="GO" id="GO:0160016">
    <property type="term" value="F:CCACCA tRNA nucleotidyltransferase activity"/>
    <property type="evidence" value="ECO:0000318"/>
    <property type="project" value="GO_Central"/>
</dbReference>
<dbReference type="GO" id="GO:0004112">
    <property type="term" value="F:cyclic-nucleotide phosphodiesterase activity"/>
    <property type="evidence" value="ECO:0007669"/>
    <property type="project" value="UniProtKB-UniRule"/>
</dbReference>
<dbReference type="GO" id="GO:0000287">
    <property type="term" value="F:magnesium ion binding"/>
    <property type="evidence" value="ECO:0007669"/>
    <property type="project" value="UniProtKB-UniRule"/>
</dbReference>
<dbReference type="GO" id="GO:0016791">
    <property type="term" value="F:phosphatase activity"/>
    <property type="evidence" value="ECO:0007669"/>
    <property type="project" value="UniProtKB-UniRule"/>
</dbReference>
<dbReference type="GO" id="GO:0000049">
    <property type="term" value="F:tRNA binding"/>
    <property type="evidence" value="ECO:0007669"/>
    <property type="project" value="UniProtKB-UniRule"/>
</dbReference>
<dbReference type="GO" id="GO:0042245">
    <property type="term" value="P:RNA repair"/>
    <property type="evidence" value="ECO:0007669"/>
    <property type="project" value="UniProtKB-KW"/>
</dbReference>
<dbReference type="GO" id="GO:0001680">
    <property type="term" value="P:tRNA 3'-terminal CCA addition"/>
    <property type="evidence" value="ECO:0000318"/>
    <property type="project" value="GO_Central"/>
</dbReference>
<dbReference type="GO" id="GO:0106354">
    <property type="term" value="P:tRNA surveillance"/>
    <property type="evidence" value="ECO:0000318"/>
    <property type="project" value="GO_Central"/>
</dbReference>
<dbReference type="CDD" id="cd00077">
    <property type="entry name" value="HDc"/>
    <property type="match status" value="1"/>
</dbReference>
<dbReference type="CDD" id="cd05398">
    <property type="entry name" value="NT_ClassII-CCAase"/>
    <property type="match status" value="1"/>
</dbReference>
<dbReference type="FunFam" id="1.10.3090.10:FF:000001">
    <property type="entry name" value="Multifunctional CCA protein"/>
    <property type="match status" value="1"/>
</dbReference>
<dbReference type="FunFam" id="3.30.460.10:FF:000016">
    <property type="entry name" value="Multifunctional CCA protein"/>
    <property type="match status" value="1"/>
</dbReference>
<dbReference type="Gene3D" id="3.30.460.10">
    <property type="entry name" value="Beta Polymerase, domain 2"/>
    <property type="match status" value="1"/>
</dbReference>
<dbReference type="Gene3D" id="1.10.3090.10">
    <property type="entry name" value="cca-adding enzyme, domain 2"/>
    <property type="match status" value="1"/>
</dbReference>
<dbReference type="HAMAP" id="MF_01261">
    <property type="entry name" value="CCA_bact_type1"/>
    <property type="match status" value="1"/>
</dbReference>
<dbReference type="HAMAP" id="MF_01262">
    <property type="entry name" value="CCA_bact_type2"/>
    <property type="match status" value="1"/>
</dbReference>
<dbReference type="InterPro" id="IPR012006">
    <property type="entry name" value="CCA_bact"/>
</dbReference>
<dbReference type="InterPro" id="IPR003607">
    <property type="entry name" value="HD/PDEase_dom"/>
</dbReference>
<dbReference type="InterPro" id="IPR006674">
    <property type="entry name" value="HD_domain"/>
</dbReference>
<dbReference type="InterPro" id="IPR043519">
    <property type="entry name" value="NT_sf"/>
</dbReference>
<dbReference type="InterPro" id="IPR002646">
    <property type="entry name" value="PolA_pol_head_dom"/>
</dbReference>
<dbReference type="InterPro" id="IPR032828">
    <property type="entry name" value="PolyA_RNA-bd"/>
</dbReference>
<dbReference type="InterPro" id="IPR050124">
    <property type="entry name" value="tRNA_CCA-adding_enzyme"/>
</dbReference>
<dbReference type="NCBIfam" id="NF008137">
    <property type="entry name" value="PRK10885.1"/>
    <property type="match status" value="1"/>
</dbReference>
<dbReference type="PANTHER" id="PTHR47545">
    <property type="entry name" value="MULTIFUNCTIONAL CCA PROTEIN"/>
    <property type="match status" value="1"/>
</dbReference>
<dbReference type="PANTHER" id="PTHR47545:SF1">
    <property type="entry name" value="MULTIFUNCTIONAL CCA PROTEIN"/>
    <property type="match status" value="1"/>
</dbReference>
<dbReference type="Pfam" id="PF01966">
    <property type="entry name" value="HD"/>
    <property type="match status" value="1"/>
</dbReference>
<dbReference type="Pfam" id="PF01743">
    <property type="entry name" value="PolyA_pol"/>
    <property type="match status" value="1"/>
</dbReference>
<dbReference type="Pfam" id="PF12627">
    <property type="entry name" value="PolyA_pol_RNAbd"/>
    <property type="match status" value="1"/>
</dbReference>
<dbReference type="PIRSF" id="PIRSF000813">
    <property type="entry name" value="CCA_bact"/>
    <property type="match status" value="1"/>
</dbReference>
<dbReference type="SMART" id="SM00471">
    <property type="entry name" value="HDc"/>
    <property type="match status" value="1"/>
</dbReference>
<dbReference type="SUPFAM" id="SSF81301">
    <property type="entry name" value="Nucleotidyltransferase"/>
    <property type="match status" value="1"/>
</dbReference>
<dbReference type="SUPFAM" id="SSF81891">
    <property type="entry name" value="Poly A polymerase C-terminal region-like"/>
    <property type="match status" value="1"/>
</dbReference>
<dbReference type="PROSITE" id="PS51831">
    <property type="entry name" value="HD"/>
    <property type="match status" value="1"/>
</dbReference>
<accession>Q8ZLY4</accession>